<feature type="signal peptide" evidence="3">
    <location>
        <begin position="1"/>
        <end position="18"/>
    </location>
</feature>
<feature type="propeptide" id="PRO_0000011096" evidence="3 5 6">
    <location>
        <begin position="19"/>
        <end position="52"/>
    </location>
</feature>
<feature type="chain" id="PRO_0000011097" description="Osteocalcin" evidence="5">
    <location>
        <begin position="53"/>
        <end position="97"/>
    </location>
</feature>
<feature type="domain" description="Gla" evidence="4">
    <location>
        <begin position="53"/>
        <end position="93"/>
    </location>
</feature>
<feature type="binding site" evidence="1">
    <location>
        <position position="63"/>
    </location>
    <ligand>
        <name>Ca(2+)</name>
        <dbReference type="ChEBI" id="CHEBI:29108"/>
        <label>1</label>
    </ligand>
</feature>
<feature type="binding site" evidence="1">
    <location>
        <position position="67"/>
    </location>
    <ligand>
        <name>Ca(2+)</name>
        <dbReference type="ChEBI" id="CHEBI:29108"/>
        <label>2</label>
    </ligand>
</feature>
<feature type="binding site" evidence="1">
    <location>
        <position position="70"/>
    </location>
    <ligand>
        <name>Ca(2+)</name>
        <dbReference type="ChEBI" id="CHEBI:29108"/>
        <label>2</label>
    </ligand>
</feature>
<feature type="binding site" evidence="1">
    <location>
        <position position="70"/>
    </location>
    <ligand>
        <name>Ca(2+)</name>
        <dbReference type="ChEBI" id="CHEBI:29108"/>
        <label>3</label>
    </ligand>
</feature>
<feature type="binding site" evidence="1">
    <location>
        <position position="76"/>
    </location>
    <ligand>
        <name>Ca(2+)</name>
        <dbReference type="ChEBI" id="CHEBI:29108"/>
        <label>3</label>
    </ligand>
</feature>
<feature type="modified residue" description="4-carboxyglutamate" evidence="4 6 7">
    <location>
        <position position="63"/>
    </location>
</feature>
<feature type="modified residue" description="4-carboxyglutamate" evidence="4 6 7">
    <location>
        <position position="67"/>
    </location>
</feature>
<feature type="modified residue" description="4-carboxyglutamate" evidence="4 6 7">
    <location>
        <position position="70"/>
    </location>
</feature>
<feature type="modified residue" description="4-carboxyglutamate" evidence="4 7">
    <location>
        <position position="77"/>
    </location>
</feature>
<feature type="disulfide bond" evidence="4 7">
    <location>
        <begin position="69"/>
        <end position="75"/>
    </location>
</feature>
<feature type="helix" evidence="10">
    <location>
        <begin position="59"/>
        <end position="70"/>
    </location>
</feature>
<feature type="helix" evidence="10">
    <location>
        <begin position="73"/>
        <end position="92"/>
    </location>
</feature>
<proteinExistence type="evidence at protein level"/>
<name>OSTCN_ARGRE</name>
<comment type="function">
    <text evidence="2">The carboxylated form is one of the main organic components of the bone matrix, which constitutes 1-2% of the total bone protein (By similarity). The carboxylated form binds strongly to apatite and calcium (By similarity).</text>
</comment>
<comment type="subcellular location">
    <subcellularLocation>
        <location evidence="5">Secreted</location>
    </subcellularLocation>
</comment>
<comment type="tissue specificity">
    <text evidence="5">In the branchial arches, BGP is found outside the chondrocyte-containing zone. It is found in some cells in the basal zone of the branchial filaments, near the branchial arches, and within the extracellular matrix in the medial zone. In the vertebra, BGP is found in the mineralized bone matrix.</text>
</comment>
<comment type="PTM">
    <text evidence="4 6 7">Gamma-carboxyglutamate residues are formed by vitamin K dependent carboxylation by GGCX. These residues are essential for the binding of calcium.</text>
</comment>
<comment type="similarity">
    <text evidence="8">Belongs to the osteocalcin/matrix Gla protein family.</text>
</comment>
<protein>
    <recommendedName>
        <fullName>Osteocalcin</fullName>
    </recommendedName>
    <alternativeName>
        <fullName>Bone Gla protein</fullName>
        <shortName>BGP</shortName>
    </alternativeName>
    <alternativeName>
        <fullName>Gamma-carboxyglutamic acid-containing protein</fullName>
    </alternativeName>
</protein>
<dbReference type="EMBL" id="AF459030">
    <property type="protein sequence ID" value="AAO48725.1"/>
    <property type="molecule type" value="mRNA"/>
</dbReference>
<dbReference type="PDB" id="1VZM">
    <property type="method" value="X-ray"/>
    <property type="resolution" value="1.40 A"/>
    <property type="chains" value="A/B/C=53-97"/>
</dbReference>
<dbReference type="PDBsum" id="1VZM"/>
<dbReference type="SMR" id="Q800Y1"/>
<dbReference type="EvolutionaryTrace" id="Q800Y1"/>
<dbReference type="GO" id="GO:0062023">
    <property type="term" value="C:collagen-containing extracellular matrix"/>
    <property type="evidence" value="ECO:0000314"/>
    <property type="project" value="UniProtKB"/>
</dbReference>
<dbReference type="GO" id="GO:0005576">
    <property type="term" value="C:extracellular region"/>
    <property type="evidence" value="ECO:0007669"/>
    <property type="project" value="UniProtKB-SubCell"/>
</dbReference>
<dbReference type="GO" id="GO:0005509">
    <property type="term" value="F:calcium ion binding"/>
    <property type="evidence" value="ECO:0007669"/>
    <property type="project" value="InterPro"/>
</dbReference>
<dbReference type="GO" id="GO:0005179">
    <property type="term" value="F:hormone activity"/>
    <property type="evidence" value="ECO:0000250"/>
    <property type="project" value="UniProtKB"/>
</dbReference>
<dbReference type="GO" id="GO:0046848">
    <property type="term" value="F:hydroxyapatite binding"/>
    <property type="evidence" value="ECO:0007669"/>
    <property type="project" value="TreeGrafter"/>
</dbReference>
<dbReference type="GO" id="GO:0008147">
    <property type="term" value="F:structural constituent of bone"/>
    <property type="evidence" value="ECO:0000250"/>
    <property type="project" value="UniProtKB"/>
</dbReference>
<dbReference type="GO" id="GO:0060348">
    <property type="term" value="P:bone development"/>
    <property type="evidence" value="ECO:0007669"/>
    <property type="project" value="InterPro"/>
</dbReference>
<dbReference type="GO" id="GO:0030282">
    <property type="term" value="P:bone mineralization"/>
    <property type="evidence" value="ECO:0000304"/>
    <property type="project" value="UniProtKB"/>
</dbReference>
<dbReference type="GO" id="GO:0032869">
    <property type="term" value="P:cellular response to insulin stimulus"/>
    <property type="evidence" value="ECO:0000250"/>
    <property type="project" value="UniProtKB"/>
</dbReference>
<dbReference type="GO" id="GO:0042593">
    <property type="term" value="P:glucose homeostasis"/>
    <property type="evidence" value="ECO:0000250"/>
    <property type="project" value="UniProtKB"/>
</dbReference>
<dbReference type="GO" id="GO:1903011">
    <property type="term" value="P:negative regulation of bone development"/>
    <property type="evidence" value="ECO:0000250"/>
    <property type="project" value="UniProtKB"/>
</dbReference>
<dbReference type="GO" id="GO:0001649">
    <property type="term" value="P:osteoblast differentiation"/>
    <property type="evidence" value="ECO:0007669"/>
    <property type="project" value="TreeGrafter"/>
</dbReference>
<dbReference type="GO" id="GO:0030500">
    <property type="term" value="P:regulation of bone mineralization"/>
    <property type="evidence" value="ECO:0007669"/>
    <property type="project" value="InterPro"/>
</dbReference>
<dbReference type="GO" id="GO:1900076">
    <property type="term" value="P:regulation of cellular response to insulin stimulus"/>
    <property type="evidence" value="ECO:0007669"/>
    <property type="project" value="InterPro"/>
</dbReference>
<dbReference type="GO" id="GO:0032571">
    <property type="term" value="P:response to vitamin K"/>
    <property type="evidence" value="ECO:0007669"/>
    <property type="project" value="InterPro"/>
</dbReference>
<dbReference type="GO" id="GO:0044342">
    <property type="term" value="P:type B pancreatic cell proliferation"/>
    <property type="evidence" value="ECO:0000250"/>
    <property type="project" value="UniProtKB"/>
</dbReference>
<dbReference type="InterPro" id="IPR035972">
    <property type="entry name" value="GLA-like_dom_SF"/>
</dbReference>
<dbReference type="InterPro" id="IPR000294">
    <property type="entry name" value="GLA_domain"/>
</dbReference>
<dbReference type="InterPro" id="IPR039176">
    <property type="entry name" value="Osteocalcin"/>
</dbReference>
<dbReference type="InterPro" id="IPR002384">
    <property type="entry name" value="Osteocalcin/MGP"/>
</dbReference>
<dbReference type="PANTHER" id="PTHR14235">
    <property type="entry name" value="OSTEOCALCIN"/>
    <property type="match status" value="1"/>
</dbReference>
<dbReference type="PANTHER" id="PTHR14235:SF0">
    <property type="entry name" value="OSTEOCALCIN"/>
    <property type="match status" value="1"/>
</dbReference>
<dbReference type="PRINTS" id="PR00002">
    <property type="entry name" value="GLABONE"/>
</dbReference>
<dbReference type="SMART" id="SM00069">
    <property type="entry name" value="GLA"/>
    <property type="match status" value="1"/>
</dbReference>
<dbReference type="SUPFAM" id="SSF57630">
    <property type="entry name" value="GLA-domain"/>
    <property type="match status" value="1"/>
</dbReference>
<dbReference type="PROSITE" id="PS00011">
    <property type="entry name" value="GLA_1"/>
    <property type="match status" value="1"/>
</dbReference>
<dbReference type="PROSITE" id="PS50998">
    <property type="entry name" value="GLA_2"/>
    <property type="match status" value="1"/>
</dbReference>
<accession>Q800Y1</accession>
<organism>
    <name type="scientific">Argyrosomus regius</name>
    <name type="common">Meagre</name>
    <dbReference type="NCBI Taxonomy" id="172269"/>
    <lineage>
        <taxon>Eukaryota</taxon>
        <taxon>Metazoa</taxon>
        <taxon>Chordata</taxon>
        <taxon>Craniata</taxon>
        <taxon>Vertebrata</taxon>
        <taxon>Euteleostomi</taxon>
        <taxon>Actinopterygii</taxon>
        <taxon>Neopterygii</taxon>
        <taxon>Teleostei</taxon>
        <taxon>Neoteleostei</taxon>
        <taxon>Acanthomorphata</taxon>
        <taxon>Eupercaria</taxon>
        <taxon>Sciaenidae</taxon>
        <taxon>Argyrosomus</taxon>
    </lineage>
</organism>
<sequence>MKTLAILVLCSLAAICLTSSASAGAQPAGDSPVQGGLFMEKDQASAVVRQTRAAKELTLAQTESLREVCETNMACDEMADAQGIVAAYQAFYGPIPF</sequence>
<gene>
    <name type="primary">bglap</name>
</gene>
<reference evidence="8 9" key="1">
    <citation type="journal article" date="2003" name="J. Bone Miner. Res.">
        <title>Purification of matrix Gla protein from a marine teleost fish, Argyrosomus regius: calcified cartilage and not bone as the primary site of MGP accumulation in fish.</title>
        <authorList>
            <person name="Simes D.C."/>
            <person name="Williamson M.K."/>
            <person name="Ortiz-Delgado J.B."/>
            <person name="Viegas C.S."/>
            <person name="Price P.A."/>
            <person name="Cancela M.L."/>
        </authorList>
    </citation>
    <scope>NUCLEOTIDE SEQUENCE [MRNA]</scope>
    <scope>PROTEIN SEQUENCE OF 53-81</scope>
    <scope>SUBCELLULAR LOCATION</scope>
    <scope>TISSUE SPECIFICITY</scope>
    <source>
        <tissue>Cartilage</tissue>
    </source>
</reference>
<reference evidence="8" key="2">
    <citation type="journal article" date="2004" name="Calcif. Tissue Int.">
        <title>Characterization of osteocalcin (BGP) and matrix Gla protein (MGP) fish specific antibodies: validation for immunodetection studies in lower vertebrates.</title>
        <authorList>
            <person name="Simes D.C."/>
            <person name="Williamson M.K."/>
            <person name="Schaff B.J."/>
            <person name="Gavaia P.J."/>
            <person name="Ingleton P.M."/>
            <person name="Price P.A."/>
            <person name="Cancela M.L."/>
        </authorList>
    </citation>
    <scope>PROTEIN SEQUENCE OF 53-88</scope>
    <scope>GAMMA-CARBOXYGLUTAMATION AT GLU-63; GLU-67 AND GLU-70</scope>
    <source>
        <tissue>Cartilage</tissue>
    </source>
</reference>
<reference key="3">
    <citation type="journal article" date="2005" name="Biochemistry">
        <title>Structural evidence of a fourth Gla residue in fish osteocalcin: biological implications.</title>
        <authorList>
            <person name="Frazao C."/>
            <person name="Simes D.C."/>
            <person name="Coelho R."/>
            <person name="Alves D."/>
            <person name="Williamson M.K."/>
            <person name="Price P.A."/>
            <person name="Cancela M.L."/>
            <person name="Carrondo M.A."/>
        </authorList>
    </citation>
    <scope>X-RAY CRYSTALLOGRAPHY (1.4 ANGSTROMS) OF 53-97</scope>
    <scope>DISULFIDE BOND</scope>
    <scope>GAMMA-CARBOXYGLUTAMATION AT GLU-63; GLU-67; GLU-70 AND GLU-77</scope>
</reference>
<evidence type="ECO:0000250" key="1">
    <source>
        <dbReference type="UniProtKB" id="P02820"/>
    </source>
</evidence>
<evidence type="ECO:0000250" key="2">
    <source>
        <dbReference type="UniProtKB" id="P86546"/>
    </source>
</evidence>
<evidence type="ECO:0000255" key="3"/>
<evidence type="ECO:0000255" key="4">
    <source>
        <dbReference type="PROSITE-ProRule" id="PRU00463"/>
    </source>
</evidence>
<evidence type="ECO:0000269" key="5">
    <source>
    </source>
</evidence>
<evidence type="ECO:0000269" key="6">
    <source>
    </source>
</evidence>
<evidence type="ECO:0000269" key="7">
    <source>
    </source>
</evidence>
<evidence type="ECO:0000305" key="8"/>
<evidence type="ECO:0000312" key="9">
    <source>
        <dbReference type="EMBL" id="AAO48725.1"/>
    </source>
</evidence>
<evidence type="ECO:0007829" key="10">
    <source>
        <dbReference type="PDB" id="1VZM"/>
    </source>
</evidence>
<keyword id="KW-0002">3D-structure</keyword>
<keyword id="KW-0091">Biomineralization</keyword>
<keyword id="KW-0106">Calcium</keyword>
<keyword id="KW-0903">Direct protein sequencing</keyword>
<keyword id="KW-1015">Disulfide bond</keyword>
<keyword id="KW-0301">Gamma-carboxyglutamic acid</keyword>
<keyword id="KW-0372">Hormone</keyword>
<keyword id="KW-0479">Metal-binding</keyword>
<keyword id="KW-0964">Secreted</keyword>
<keyword id="KW-0732">Signal</keyword>